<keyword id="KW-0030">Aminoacyl-tRNA synthetase</keyword>
<keyword id="KW-0067">ATP-binding</keyword>
<keyword id="KW-0963">Cytoplasm</keyword>
<keyword id="KW-0436">Ligase</keyword>
<keyword id="KW-0479">Metal-binding</keyword>
<keyword id="KW-0547">Nucleotide-binding</keyword>
<keyword id="KW-0648">Protein biosynthesis</keyword>
<keyword id="KW-0694">RNA-binding</keyword>
<keyword id="KW-0820">tRNA-binding</keyword>
<keyword id="KW-0862">Zinc</keyword>
<gene>
    <name evidence="1" type="primary">thrS</name>
    <name type="ordered locus">SSU05_1366</name>
</gene>
<reference key="1">
    <citation type="journal article" date="2007" name="PLoS ONE">
        <title>A glimpse of streptococcal toxic shock syndrome from comparative genomics of S. suis 2 Chinese isolates.</title>
        <authorList>
            <person name="Chen C."/>
            <person name="Tang J."/>
            <person name="Dong W."/>
            <person name="Wang C."/>
            <person name="Feng Y."/>
            <person name="Wang J."/>
            <person name="Zheng F."/>
            <person name="Pan X."/>
            <person name="Liu D."/>
            <person name="Li M."/>
            <person name="Song Y."/>
            <person name="Zhu X."/>
            <person name="Sun H."/>
            <person name="Feng T."/>
            <person name="Guo Z."/>
            <person name="Ju A."/>
            <person name="Ge J."/>
            <person name="Dong Y."/>
            <person name="Sun W."/>
            <person name="Jiang Y."/>
            <person name="Wang J."/>
            <person name="Yan J."/>
            <person name="Yang H."/>
            <person name="Wang X."/>
            <person name="Gao G.F."/>
            <person name="Yang R."/>
            <person name="Wang J."/>
            <person name="Yu J."/>
        </authorList>
    </citation>
    <scope>NUCLEOTIDE SEQUENCE [LARGE SCALE GENOMIC DNA]</scope>
    <source>
        <strain>05ZYH33</strain>
    </source>
</reference>
<evidence type="ECO:0000255" key="1">
    <source>
        <dbReference type="HAMAP-Rule" id="MF_00184"/>
    </source>
</evidence>
<evidence type="ECO:0000255" key="2">
    <source>
        <dbReference type="PROSITE-ProRule" id="PRU01228"/>
    </source>
</evidence>
<organism>
    <name type="scientific">Streptococcus suis (strain 05ZYH33)</name>
    <dbReference type="NCBI Taxonomy" id="391295"/>
    <lineage>
        <taxon>Bacteria</taxon>
        <taxon>Bacillati</taxon>
        <taxon>Bacillota</taxon>
        <taxon>Bacilli</taxon>
        <taxon>Lactobacillales</taxon>
        <taxon>Streptococcaceae</taxon>
        <taxon>Streptococcus</taxon>
    </lineage>
</organism>
<comment type="function">
    <text evidence="1">Catalyzes the attachment of threonine to tRNA(Thr) in a two-step reaction: L-threonine is first activated by ATP to form Thr-AMP and then transferred to the acceptor end of tRNA(Thr). Also edits incorrectly charged L-seryl-tRNA(Thr).</text>
</comment>
<comment type="catalytic activity">
    <reaction evidence="1">
        <text>tRNA(Thr) + L-threonine + ATP = L-threonyl-tRNA(Thr) + AMP + diphosphate + H(+)</text>
        <dbReference type="Rhea" id="RHEA:24624"/>
        <dbReference type="Rhea" id="RHEA-COMP:9670"/>
        <dbReference type="Rhea" id="RHEA-COMP:9704"/>
        <dbReference type="ChEBI" id="CHEBI:15378"/>
        <dbReference type="ChEBI" id="CHEBI:30616"/>
        <dbReference type="ChEBI" id="CHEBI:33019"/>
        <dbReference type="ChEBI" id="CHEBI:57926"/>
        <dbReference type="ChEBI" id="CHEBI:78442"/>
        <dbReference type="ChEBI" id="CHEBI:78534"/>
        <dbReference type="ChEBI" id="CHEBI:456215"/>
        <dbReference type="EC" id="6.1.1.3"/>
    </reaction>
</comment>
<comment type="cofactor">
    <cofactor evidence="1">
        <name>Zn(2+)</name>
        <dbReference type="ChEBI" id="CHEBI:29105"/>
    </cofactor>
    <text evidence="1">Binds 1 zinc ion per subunit.</text>
</comment>
<comment type="subunit">
    <text evidence="1">Homodimer.</text>
</comment>
<comment type="subcellular location">
    <subcellularLocation>
        <location evidence="1">Cytoplasm</location>
    </subcellularLocation>
</comment>
<comment type="similarity">
    <text evidence="1">Belongs to the class-II aminoacyl-tRNA synthetase family.</text>
</comment>
<protein>
    <recommendedName>
        <fullName evidence="1">Threonine--tRNA ligase</fullName>
        <ecNumber evidence="1">6.1.1.3</ecNumber>
    </recommendedName>
    <alternativeName>
        <fullName evidence="1">Threonyl-tRNA synthetase</fullName>
        <shortName evidence="1">ThrRS</shortName>
    </alternativeName>
</protein>
<feature type="chain" id="PRO_1000020535" description="Threonine--tRNA ligase">
    <location>
        <begin position="1"/>
        <end position="650"/>
    </location>
</feature>
<feature type="domain" description="TGS" evidence="2">
    <location>
        <begin position="1"/>
        <end position="61"/>
    </location>
</feature>
<feature type="region of interest" description="Catalytic" evidence="1">
    <location>
        <begin position="242"/>
        <end position="540"/>
    </location>
</feature>
<feature type="binding site" evidence="1">
    <location>
        <position position="336"/>
    </location>
    <ligand>
        <name>Zn(2+)</name>
        <dbReference type="ChEBI" id="CHEBI:29105"/>
    </ligand>
</feature>
<feature type="binding site" evidence="1">
    <location>
        <position position="387"/>
    </location>
    <ligand>
        <name>Zn(2+)</name>
        <dbReference type="ChEBI" id="CHEBI:29105"/>
    </ligand>
</feature>
<feature type="binding site" evidence="1">
    <location>
        <position position="517"/>
    </location>
    <ligand>
        <name>Zn(2+)</name>
        <dbReference type="ChEBI" id="CHEBI:29105"/>
    </ligand>
</feature>
<proteinExistence type="inferred from homology"/>
<accession>A4VW43</accession>
<dbReference type="EC" id="6.1.1.3" evidence="1"/>
<dbReference type="EMBL" id="CP000407">
    <property type="protein sequence ID" value="ABP90332.1"/>
    <property type="molecule type" value="Genomic_DNA"/>
</dbReference>
<dbReference type="SMR" id="A4VW43"/>
<dbReference type="STRING" id="391295.SSU05_1366"/>
<dbReference type="KEGG" id="ssu:SSU05_1366"/>
<dbReference type="eggNOG" id="COG0441">
    <property type="taxonomic scope" value="Bacteria"/>
</dbReference>
<dbReference type="HOGENOM" id="CLU_008554_0_1_9"/>
<dbReference type="GO" id="GO:0005737">
    <property type="term" value="C:cytoplasm"/>
    <property type="evidence" value="ECO:0007669"/>
    <property type="project" value="UniProtKB-SubCell"/>
</dbReference>
<dbReference type="GO" id="GO:0005524">
    <property type="term" value="F:ATP binding"/>
    <property type="evidence" value="ECO:0007669"/>
    <property type="project" value="UniProtKB-UniRule"/>
</dbReference>
<dbReference type="GO" id="GO:0140096">
    <property type="term" value="F:catalytic activity, acting on a protein"/>
    <property type="evidence" value="ECO:0007669"/>
    <property type="project" value="UniProtKB-ARBA"/>
</dbReference>
<dbReference type="GO" id="GO:0046872">
    <property type="term" value="F:metal ion binding"/>
    <property type="evidence" value="ECO:0007669"/>
    <property type="project" value="UniProtKB-KW"/>
</dbReference>
<dbReference type="GO" id="GO:0004829">
    <property type="term" value="F:threonine-tRNA ligase activity"/>
    <property type="evidence" value="ECO:0007669"/>
    <property type="project" value="UniProtKB-UniRule"/>
</dbReference>
<dbReference type="GO" id="GO:0016740">
    <property type="term" value="F:transferase activity"/>
    <property type="evidence" value="ECO:0007669"/>
    <property type="project" value="UniProtKB-ARBA"/>
</dbReference>
<dbReference type="GO" id="GO:0000049">
    <property type="term" value="F:tRNA binding"/>
    <property type="evidence" value="ECO:0007669"/>
    <property type="project" value="UniProtKB-KW"/>
</dbReference>
<dbReference type="GO" id="GO:0006435">
    <property type="term" value="P:threonyl-tRNA aminoacylation"/>
    <property type="evidence" value="ECO:0007669"/>
    <property type="project" value="UniProtKB-UniRule"/>
</dbReference>
<dbReference type="CDD" id="cd01667">
    <property type="entry name" value="TGS_ThrRS"/>
    <property type="match status" value="1"/>
</dbReference>
<dbReference type="CDD" id="cd00860">
    <property type="entry name" value="ThrRS_anticodon"/>
    <property type="match status" value="1"/>
</dbReference>
<dbReference type="CDD" id="cd00771">
    <property type="entry name" value="ThrRS_core"/>
    <property type="match status" value="1"/>
</dbReference>
<dbReference type="FunFam" id="3.10.20.30:FF:000005">
    <property type="entry name" value="Threonine--tRNA ligase"/>
    <property type="match status" value="1"/>
</dbReference>
<dbReference type="FunFam" id="3.30.54.20:FF:000002">
    <property type="entry name" value="Threonine--tRNA ligase"/>
    <property type="match status" value="1"/>
</dbReference>
<dbReference type="FunFam" id="3.30.930.10:FF:000002">
    <property type="entry name" value="Threonine--tRNA ligase"/>
    <property type="match status" value="1"/>
</dbReference>
<dbReference type="FunFam" id="3.40.50.800:FF:000001">
    <property type="entry name" value="Threonine--tRNA ligase"/>
    <property type="match status" value="1"/>
</dbReference>
<dbReference type="FunFam" id="3.30.980.10:FF:000005">
    <property type="entry name" value="Threonyl-tRNA synthetase, mitochondrial"/>
    <property type="match status" value="1"/>
</dbReference>
<dbReference type="Gene3D" id="3.10.20.30">
    <property type="match status" value="1"/>
</dbReference>
<dbReference type="Gene3D" id="3.30.54.20">
    <property type="match status" value="1"/>
</dbReference>
<dbReference type="Gene3D" id="3.40.50.800">
    <property type="entry name" value="Anticodon-binding domain"/>
    <property type="match status" value="1"/>
</dbReference>
<dbReference type="Gene3D" id="3.30.930.10">
    <property type="entry name" value="Bira Bifunctional Protein, Domain 2"/>
    <property type="match status" value="1"/>
</dbReference>
<dbReference type="Gene3D" id="3.30.980.10">
    <property type="entry name" value="Threonyl-trna Synthetase, Chain A, domain 2"/>
    <property type="match status" value="1"/>
</dbReference>
<dbReference type="HAMAP" id="MF_00184">
    <property type="entry name" value="Thr_tRNA_synth"/>
    <property type="match status" value="1"/>
</dbReference>
<dbReference type="InterPro" id="IPR002314">
    <property type="entry name" value="aa-tRNA-synt_IIb"/>
</dbReference>
<dbReference type="InterPro" id="IPR006195">
    <property type="entry name" value="aa-tRNA-synth_II"/>
</dbReference>
<dbReference type="InterPro" id="IPR045864">
    <property type="entry name" value="aa-tRNA-synth_II/BPL/LPL"/>
</dbReference>
<dbReference type="InterPro" id="IPR004154">
    <property type="entry name" value="Anticodon-bd"/>
</dbReference>
<dbReference type="InterPro" id="IPR036621">
    <property type="entry name" value="Anticodon-bd_dom_sf"/>
</dbReference>
<dbReference type="InterPro" id="IPR012675">
    <property type="entry name" value="Beta-grasp_dom_sf"/>
</dbReference>
<dbReference type="InterPro" id="IPR004095">
    <property type="entry name" value="TGS"/>
</dbReference>
<dbReference type="InterPro" id="IPR012676">
    <property type="entry name" value="TGS-like"/>
</dbReference>
<dbReference type="InterPro" id="IPR002320">
    <property type="entry name" value="Thr-tRNA-ligase_IIa"/>
</dbReference>
<dbReference type="InterPro" id="IPR018163">
    <property type="entry name" value="Thr/Ala-tRNA-synth_IIc_edit"/>
</dbReference>
<dbReference type="InterPro" id="IPR047246">
    <property type="entry name" value="ThrRS_anticodon"/>
</dbReference>
<dbReference type="InterPro" id="IPR033728">
    <property type="entry name" value="ThrRS_core"/>
</dbReference>
<dbReference type="InterPro" id="IPR012947">
    <property type="entry name" value="tRNA_SAD"/>
</dbReference>
<dbReference type="NCBIfam" id="TIGR00418">
    <property type="entry name" value="thrS"/>
    <property type="match status" value="1"/>
</dbReference>
<dbReference type="PANTHER" id="PTHR11451:SF56">
    <property type="entry name" value="THREONINE--TRNA LIGASE 1"/>
    <property type="match status" value="1"/>
</dbReference>
<dbReference type="PANTHER" id="PTHR11451">
    <property type="entry name" value="THREONINE-TRNA LIGASE"/>
    <property type="match status" value="1"/>
</dbReference>
<dbReference type="Pfam" id="PF03129">
    <property type="entry name" value="HGTP_anticodon"/>
    <property type="match status" value="1"/>
</dbReference>
<dbReference type="Pfam" id="PF02824">
    <property type="entry name" value="TGS"/>
    <property type="match status" value="1"/>
</dbReference>
<dbReference type="Pfam" id="PF00587">
    <property type="entry name" value="tRNA-synt_2b"/>
    <property type="match status" value="1"/>
</dbReference>
<dbReference type="Pfam" id="PF07973">
    <property type="entry name" value="tRNA_SAD"/>
    <property type="match status" value="1"/>
</dbReference>
<dbReference type="PRINTS" id="PR01047">
    <property type="entry name" value="TRNASYNTHTHR"/>
</dbReference>
<dbReference type="SMART" id="SM00863">
    <property type="entry name" value="tRNA_SAD"/>
    <property type="match status" value="1"/>
</dbReference>
<dbReference type="SUPFAM" id="SSF52954">
    <property type="entry name" value="Class II aaRS ABD-related"/>
    <property type="match status" value="1"/>
</dbReference>
<dbReference type="SUPFAM" id="SSF55681">
    <property type="entry name" value="Class II aaRS and biotin synthetases"/>
    <property type="match status" value="1"/>
</dbReference>
<dbReference type="SUPFAM" id="SSF81271">
    <property type="entry name" value="TGS-like"/>
    <property type="match status" value="1"/>
</dbReference>
<dbReference type="SUPFAM" id="SSF55186">
    <property type="entry name" value="ThrRS/AlaRS common domain"/>
    <property type="match status" value="1"/>
</dbReference>
<dbReference type="PROSITE" id="PS50862">
    <property type="entry name" value="AA_TRNA_LIGASE_II"/>
    <property type="match status" value="1"/>
</dbReference>
<dbReference type="PROSITE" id="PS51880">
    <property type="entry name" value="TGS"/>
    <property type="match status" value="1"/>
</dbReference>
<sequence length="650" mass="74759">MIKITFPDGAVREYQAGVTTFEIAESISKSLAKKALAGKFNGKLIDTTRAIDEDGTLEIVMPDHDDALDILRHSAAHLFAQAARRLFPDIKLGVGPAIQDGFYYDTDNAAGQISNEDLPRIQEEMMKIVKENFPSERREVTKEEALEIFKNDPYKLELIHEHSDDEGGLTIYTQGEYVDLCRGPHVPSTGRIQIFELLNVAGAYWRGKSENPMMQRVYGTAWFDKKDLKAYLQMREEAKERDHRKLGKELDLFMISQEVGQGLPFWLPNGATIRRTLERYITDKELASGYQHVYTPPLASVELYKTSGHWEHYSEDMFPTMDMGDGEEFVLRPMNCPHHIQVYKNHVRSYRELPVRIAELGMMHRYEKSGALTGLQRVREMTLNDGHIFVTPEQIQEEFKKALQLIIDVYADFNLNDYRFRLSYRDPEDKEKYYDNDEMWENAQRMLKGAMDEMGVDYFEAEGEAAFYGPKLDIQVKTALGNEETLSTIQLDFLLPERFGLTYIGADGEEHRPVMIHRGVISTMERFTAILIETYKGAFPTWLAPTQVTMIPISVEAHLDYAWKVAKELQDRGVRVHVDERNEKMQYKIRQSQTSKIPYQLIVGDKEMEDNAVNVRRYGSKATQTQSVSEFVDHILADIARKSRPAEAAE</sequence>
<name>SYT_STRSY</name>